<accession>A3CG83</accession>
<accession>P25074</accession>
<accession>Q2QV69</accession>
<proteinExistence type="inferred from homology"/>
<dbReference type="EMBL" id="DP000011">
    <property type="protein sequence ID" value="ABA97187.1"/>
    <property type="molecule type" value="Genomic_DNA"/>
</dbReference>
<dbReference type="EMBL" id="AP008218">
    <property type="status" value="NOT_ANNOTATED_CDS"/>
    <property type="molecule type" value="Genomic_DNA"/>
</dbReference>
<dbReference type="EMBL" id="AP014968">
    <property type="status" value="NOT_ANNOTATED_CDS"/>
    <property type="molecule type" value="Genomic_DNA"/>
</dbReference>
<dbReference type="EMBL" id="CM000149">
    <property type="status" value="NOT_ANNOTATED_CDS"/>
    <property type="molecule type" value="Genomic_DNA"/>
</dbReference>
<dbReference type="PIR" id="S13385">
    <property type="entry name" value="KNRZG1"/>
</dbReference>
<dbReference type="STRING" id="39947.A3CG83"/>
<dbReference type="PaxDb" id="39947-A3CG83"/>
<dbReference type="InParanoid" id="A3CG83"/>
<dbReference type="Proteomes" id="UP000000763">
    <property type="component" value="Chromosome 12"/>
</dbReference>
<dbReference type="Proteomes" id="UP000007752">
    <property type="component" value="Chromosome 12"/>
</dbReference>
<dbReference type="Proteomes" id="UP000059680">
    <property type="component" value="Chromosome 12"/>
</dbReference>
<dbReference type="GO" id="GO:0005576">
    <property type="term" value="C:extracellular region"/>
    <property type="evidence" value="ECO:0007669"/>
    <property type="project" value="UniProtKB-KW"/>
</dbReference>
<dbReference type="GO" id="GO:0071555">
    <property type="term" value="P:cell wall organization"/>
    <property type="evidence" value="ECO:0007669"/>
    <property type="project" value="UniProtKB-KW"/>
</dbReference>
<dbReference type="InterPro" id="IPR040417">
    <property type="entry name" value="GRP1/2"/>
</dbReference>
<dbReference type="PANTHER" id="PTHR33548">
    <property type="entry name" value="GLYCINE-RICH CELL WALL STRUCTURAL PROTEIN 2"/>
    <property type="match status" value="1"/>
</dbReference>
<dbReference type="PRINTS" id="PR01228">
    <property type="entry name" value="EGGSHELL"/>
</dbReference>
<gene>
    <name type="primary">GRP-1</name>
    <name type="ordered locus">Os12g0241300</name>
    <name type="ordered locus">LOC_Os12g13840</name>
    <name type="ORF">OsJ_034305</name>
</gene>
<feature type="signal peptide" evidence="1">
    <location>
        <begin position="1"/>
        <end position="23"/>
    </location>
</feature>
<feature type="chain" id="PRO_0000021376" description="Putative glycine-rich cell wall structural protein 1">
    <location>
        <begin position="24"/>
        <end position="166"/>
    </location>
</feature>
<feature type="repeat" description="R2; Tyr-rich">
    <location>
        <begin position="56"/>
        <end position="62"/>
    </location>
</feature>
<feature type="repeat" description="R2; Tyr-rich">
    <location>
        <begin position="93"/>
        <end position="99"/>
    </location>
</feature>
<feature type="repeat" description="R2; Tyr-rich">
    <location>
        <begin position="132"/>
        <end position="138"/>
    </location>
</feature>
<feature type="region of interest" description="Disordered" evidence="2">
    <location>
        <begin position="105"/>
        <end position="125"/>
    </location>
</feature>
<feature type="region of interest" description="Disordered" evidence="2">
    <location>
        <begin position="144"/>
        <end position="166"/>
    </location>
</feature>
<feature type="compositionally biased region" description="Gly residues" evidence="2">
    <location>
        <begin position="144"/>
        <end position="160"/>
    </location>
</feature>
<name>GRP1_ORYSJ</name>
<sequence>MARKVIALAFLLLLTISLSKSNAARVIKYNGGESGGGGGGGGGGGGGGNGSGSGSGYGYNYGKGGGQSGGGQGSGGGGGGGGGGSNGSGSGSGYGYGYGQGNGGAQGQGSGGGGGGGGGGGGGGSGQGSGSGYGYGYGKGGGGGGGGGGDGGGGGGGGSAYVGRHE</sequence>
<organism>
    <name type="scientific">Oryza sativa subsp. japonica</name>
    <name type="common">Rice</name>
    <dbReference type="NCBI Taxonomy" id="39947"/>
    <lineage>
        <taxon>Eukaryota</taxon>
        <taxon>Viridiplantae</taxon>
        <taxon>Streptophyta</taxon>
        <taxon>Embryophyta</taxon>
        <taxon>Tracheophyta</taxon>
        <taxon>Spermatophyta</taxon>
        <taxon>Magnoliopsida</taxon>
        <taxon>Liliopsida</taxon>
        <taxon>Poales</taxon>
        <taxon>Poaceae</taxon>
        <taxon>BOP clade</taxon>
        <taxon>Oryzoideae</taxon>
        <taxon>Oryzeae</taxon>
        <taxon>Oryzinae</taxon>
        <taxon>Oryza</taxon>
        <taxon>Oryza sativa</taxon>
    </lineage>
</organism>
<evidence type="ECO:0000255" key="1"/>
<evidence type="ECO:0000256" key="2">
    <source>
        <dbReference type="SAM" id="MobiDB-lite"/>
    </source>
</evidence>
<evidence type="ECO:0000305" key="3"/>
<comment type="function">
    <text evidence="3">Responsible for plasticity of the cell wall.</text>
</comment>
<comment type="subcellular location">
    <subcellularLocation>
        <location evidence="3">Secreted</location>
        <location evidence="3">Cell wall</location>
    </subcellularLocation>
</comment>
<reference key="1">
    <citation type="journal article" date="2005" name="BMC Biol.">
        <title>The sequence of rice chromosomes 11 and 12, rich in disease resistance genes and recent gene duplications.</title>
        <authorList>
            <consortium name="The rice chromosomes 11 and 12 sequencing consortia"/>
        </authorList>
    </citation>
    <scope>NUCLEOTIDE SEQUENCE [LARGE SCALE GENOMIC DNA]</scope>
    <source>
        <strain>cv. Nipponbare</strain>
    </source>
</reference>
<reference key="2">
    <citation type="journal article" date="2005" name="Nature">
        <title>The map-based sequence of the rice genome.</title>
        <authorList>
            <consortium name="International rice genome sequencing project (IRGSP)"/>
        </authorList>
    </citation>
    <scope>NUCLEOTIDE SEQUENCE [LARGE SCALE GENOMIC DNA]</scope>
    <source>
        <strain>cv. Nipponbare</strain>
    </source>
</reference>
<reference key="3">
    <citation type="journal article" date="2008" name="Nucleic Acids Res.">
        <title>The rice annotation project database (RAP-DB): 2008 update.</title>
        <authorList>
            <consortium name="The rice annotation project (RAP)"/>
        </authorList>
    </citation>
    <scope>GENOME REANNOTATION</scope>
    <source>
        <strain>cv. Nipponbare</strain>
    </source>
</reference>
<reference key="4">
    <citation type="journal article" date="2013" name="Rice">
        <title>Improvement of the Oryza sativa Nipponbare reference genome using next generation sequence and optical map data.</title>
        <authorList>
            <person name="Kawahara Y."/>
            <person name="de la Bastide M."/>
            <person name="Hamilton J.P."/>
            <person name="Kanamori H."/>
            <person name="McCombie W.R."/>
            <person name="Ouyang S."/>
            <person name="Schwartz D.C."/>
            <person name="Tanaka T."/>
            <person name="Wu J."/>
            <person name="Zhou S."/>
            <person name="Childs K.L."/>
            <person name="Davidson R.M."/>
            <person name="Lin H."/>
            <person name="Quesada-Ocampo L."/>
            <person name="Vaillancourt B."/>
            <person name="Sakai H."/>
            <person name="Lee S.S."/>
            <person name="Kim J."/>
            <person name="Numa H."/>
            <person name="Itoh T."/>
            <person name="Buell C.R."/>
            <person name="Matsumoto T."/>
        </authorList>
    </citation>
    <scope>GENOME REANNOTATION</scope>
    <source>
        <strain>cv. Nipponbare</strain>
    </source>
</reference>
<reference key="5">
    <citation type="journal article" date="2005" name="PLoS Biol.">
        <title>The genomes of Oryza sativa: a history of duplications.</title>
        <authorList>
            <person name="Yu J."/>
            <person name="Wang J."/>
            <person name="Lin W."/>
            <person name="Li S."/>
            <person name="Li H."/>
            <person name="Zhou J."/>
            <person name="Ni P."/>
            <person name="Dong W."/>
            <person name="Hu S."/>
            <person name="Zeng C."/>
            <person name="Zhang J."/>
            <person name="Zhang Y."/>
            <person name="Li R."/>
            <person name="Xu Z."/>
            <person name="Li S."/>
            <person name="Li X."/>
            <person name="Zheng H."/>
            <person name="Cong L."/>
            <person name="Lin L."/>
            <person name="Yin J."/>
            <person name="Geng J."/>
            <person name="Li G."/>
            <person name="Shi J."/>
            <person name="Liu J."/>
            <person name="Lv H."/>
            <person name="Li J."/>
            <person name="Wang J."/>
            <person name="Deng Y."/>
            <person name="Ran L."/>
            <person name="Shi X."/>
            <person name="Wang X."/>
            <person name="Wu Q."/>
            <person name="Li C."/>
            <person name="Ren X."/>
            <person name="Wang J."/>
            <person name="Wang X."/>
            <person name="Li D."/>
            <person name="Liu D."/>
            <person name="Zhang X."/>
            <person name="Ji Z."/>
            <person name="Zhao W."/>
            <person name="Sun Y."/>
            <person name="Zhang Z."/>
            <person name="Bao J."/>
            <person name="Han Y."/>
            <person name="Dong L."/>
            <person name="Ji J."/>
            <person name="Chen P."/>
            <person name="Wu S."/>
            <person name="Liu J."/>
            <person name="Xiao Y."/>
            <person name="Bu D."/>
            <person name="Tan J."/>
            <person name="Yang L."/>
            <person name="Ye C."/>
            <person name="Zhang J."/>
            <person name="Xu J."/>
            <person name="Zhou Y."/>
            <person name="Yu Y."/>
            <person name="Zhang B."/>
            <person name="Zhuang S."/>
            <person name="Wei H."/>
            <person name="Liu B."/>
            <person name="Lei M."/>
            <person name="Yu H."/>
            <person name="Li Y."/>
            <person name="Xu H."/>
            <person name="Wei S."/>
            <person name="He X."/>
            <person name="Fang L."/>
            <person name="Zhang Z."/>
            <person name="Zhang Y."/>
            <person name="Huang X."/>
            <person name="Su Z."/>
            <person name="Tong W."/>
            <person name="Li J."/>
            <person name="Tong Z."/>
            <person name="Li S."/>
            <person name="Ye J."/>
            <person name="Wang L."/>
            <person name="Fang L."/>
            <person name="Lei T."/>
            <person name="Chen C.-S."/>
            <person name="Chen H.-C."/>
            <person name="Xu Z."/>
            <person name="Li H."/>
            <person name="Huang H."/>
            <person name="Zhang F."/>
            <person name="Xu H."/>
            <person name="Li N."/>
            <person name="Zhao C."/>
            <person name="Li S."/>
            <person name="Dong L."/>
            <person name="Huang Y."/>
            <person name="Li L."/>
            <person name="Xi Y."/>
            <person name="Qi Q."/>
            <person name="Li W."/>
            <person name="Zhang B."/>
            <person name="Hu W."/>
            <person name="Zhang Y."/>
            <person name="Tian X."/>
            <person name="Jiao Y."/>
            <person name="Liang X."/>
            <person name="Jin J."/>
            <person name="Gao L."/>
            <person name="Zheng W."/>
            <person name="Hao B."/>
            <person name="Liu S.-M."/>
            <person name="Wang W."/>
            <person name="Yuan L."/>
            <person name="Cao M."/>
            <person name="McDermott J."/>
            <person name="Samudrala R."/>
            <person name="Wang J."/>
            <person name="Wong G.K.-S."/>
            <person name="Yang H."/>
        </authorList>
    </citation>
    <scope>NUCLEOTIDE SEQUENCE [LARGE SCALE GENOMIC DNA]</scope>
    <source>
        <strain>cv. Nipponbare</strain>
    </source>
</reference>
<keyword id="KW-0134">Cell wall</keyword>
<keyword id="KW-0961">Cell wall biogenesis/degradation</keyword>
<keyword id="KW-1185">Reference proteome</keyword>
<keyword id="KW-0677">Repeat</keyword>
<keyword id="KW-0964">Secreted</keyword>
<keyword id="KW-0732">Signal</keyword>
<protein>
    <recommendedName>
        <fullName>Putative glycine-rich cell wall structural protein 1</fullName>
    </recommendedName>
</protein>